<protein>
    <recommendedName>
        <fullName>1-(5-phosphoribosyl)-5-[(5-phosphoribosylamino)methylideneamino] imidazole-4-carboxamide isomerase 2</fullName>
        <ecNumber>5.3.1.16</ecNumber>
    </recommendedName>
    <alternativeName>
        <fullName>Phosphoribosylformimino-5-aminoimidazole carboxamide ribotide isomerase 2</fullName>
    </alternativeName>
</protein>
<gene>
    <name type="primary">hisA2</name>
    <name type="ordered locus">plu0797</name>
</gene>
<name>HIS42_PHOLL</name>
<keyword id="KW-0028">Amino-acid biosynthesis</keyword>
<keyword id="KW-0963">Cytoplasm</keyword>
<keyword id="KW-0368">Histidine biosynthesis</keyword>
<keyword id="KW-0413">Isomerase</keyword>
<keyword id="KW-1185">Reference proteome</keyword>
<organism>
    <name type="scientific">Photorhabdus laumondii subsp. laumondii (strain DSM 15139 / CIP 105565 / TT01)</name>
    <name type="common">Photorhabdus luminescens subsp. laumondii</name>
    <dbReference type="NCBI Taxonomy" id="243265"/>
    <lineage>
        <taxon>Bacteria</taxon>
        <taxon>Pseudomonadati</taxon>
        <taxon>Pseudomonadota</taxon>
        <taxon>Gammaproteobacteria</taxon>
        <taxon>Enterobacterales</taxon>
        <taxon>Morganellaceae</taxon>
        <taxon>Photorhabdus</taxon>
    </lineage>
</organism>
<evidence type="ECO:0000250" key="1"/>
<evidence type="ECO:0000305" key="2"/>
<accession>Q7N8D1</accession>
<feature type="chain" id="PRO_0000142032" description="1-(5-phosphoribosyl)-5-[(5-phosphoribosylamino)methylideneamino] imidazole-4-carboxamide isomerase 2">
    <location>
        <begin position="1"/>
        <end position="258"/>
    </location>
</feature>
<feature type="active site" description="Proton acceptor" evidence="1">
    <location>
        <position position="14"/>
    </location>
</feature>
<feature type="active site" description="Proton donor" evidence="1">
    <location>
        <position position="140"/>
    </location>
</feature>
<comment type="catalytic activity">
    <reaction>
        <text>1-(5-phospho-beta-D-ribosyl)-5-[(5-phospho-beta-D-ribosylamino)methylideneamino]imidazole-4-carboxamide = 5-[(5-phospho-1-deoxy-D-ribulos-1-ylimino)methylamino]-1-(5-phospho-beta-D-ribosyl)imidazole-4-carboxamide</text>
        <dbReference type="Rhea" id="RHEA:15469"/>
        <dbReference type="ChEBI" id="CHEBI:58435"/>
        <dbReference type="ChEBI" id="CHEBI:58525"/>
        <dbReference type="EC" id="5.3.1.16"/>
    </reaction>
</comment>
<comment type="pathway">
    <text>Amino-acid biosynthesis; L-histidine biosynthesis; L-histidine from 5-phospho-alpha-D-ribose 1-diphosphate: step 4/9.</text>
</comment>
<comment type="subcellular location">
    <subcellularLocation>
        <location evidence="1">Cytoplasm</location>
    </subcellularLocation>
</comment>
<comment type="similarity">
    <text evidence="2">Belongs to the HisA/HisF family.</text>
</comment>
<reference key="1">
    <citation type="journal article" date="2003" name="Nat. Biotechnol.">
        <title>The genome sequence of the entomopathogenic bacterium Photorhabdus luminescens.</title>
        <authorList>
            <person name="Duchaud E."/>
            <person name="Rusniok C."/>
            <person name="Frangeul L."/>
            <person name="Buchrieser C."/>
            <person name="Givaudan A."/>
            <person name="Taourit S."/>
            <person name="Bocs S."/>
            <person name="Boursaux-Eude C."/>
            <person name="Chandler M."/>
            <person name="Charles J.-F."/>
            <person name="Dassa E."/>
            <person name="Derose R."/>
            <person name="Derzelle S."/>
            <person name="Freyssinet G."/>
            <person name="Gaudriault S."/>
            <person name="Medigue C."/>
            <person name="Lanois A."/>
            <person name="Powell K."/>
            <person name="Siguier P."/>
            <person name="Vincent R."/>
            <person name="Wingate V."/>
            <person name="Zouine M."/>
            <person name="Glaser P."/>
            <person name="Boemare N."/>
            <person name="Danchin A."/>
            <person name="Kunst F."/>
        </authorList>
    </citation>
    <scope>NUCLEOTIDE SEQUENCE [LARGE SCALE GENOMIC DNA]</scope>
    <source>
        <strain>DSM 15139 / CIP 105565 / TT01</strain>
    </source>
</reference>
<dbReference type="EC" id="5.3.1.16"/>
<dbReference type="EMBL" id="BX571861">
    <property type="protein sequence ID" value="CAE13092.1"/>
    <property type="molecule type" value="Genomic_DNA"/>
</dbReference>
<dbReference type="RefSeq" id="WP_011145171.1">
    <property type="nucleotide sequence ID" value="NC_005126.1"/>
</dbReference>
<dbReference type="SMR" id="Q7N8D1"/>
<dbReference type="STRING" id="243265.plu0797"/>
<dbReference type="GeneID" id="48847087"/>
<dbReference type="KEGG" id="plu:plu0797"/>
<dbReference type="eggNOG" id="COG0106">
    <property type="taxonomic scope" value="Bacteria"/>
</dbReference>
<dbReference type="HOGENOM" id="CLU_048577_1_1_6"/>
<dbReference type="OrthoDB" id="9807749at2"/>
<dbReference type="UniPathway" id="UPA00031">
    <property type="reaction ID" value="UER00009"/>
</dbReference>
<dbReference type="Proteomes" id="UP000002514">
    <property type="component" value="Chromosome"/>
</dbReference>
<dbReference type="GO" id="GO:0005737">
    <property type="term" value="C:cytoplasm"/>
    <property type="evidence" value="ECO:0007669"/>
    <property type="project" value="UniProtKB-SubCell"/>
</dbReference>
<dbReference type="GO" id="GO:0003949">
    <property type="term" value="F:1-(5-phosphoribosyl)-5-[(5-phosphoribosylamino)methylideneamino]imidazole-4-carboxamide isomerase activity"/>
    <property type="evidence" value="ECO:0007669"/>
    <property type="project" value="UniProtKB-UniRule"/>
</dbReference>
<dbReference type="GO" id="GO:0000105">
    <property type="term" value="P:L-histidine biosynthetic process"/>
    <property type="evidence" value="ECO:0007669"/>
    <property type="project" value="UniProtKB-UniRule"/>
</dbReference>
<dbReference type="GO" id="GO:0000162">
    <property type="term" value="P:L-tryptophan biosynthetic process"/>
    <property type="evidence" value="ECO:0007669"/>
    <property type="project" value="TreeGrafter"/>
</dbReference>
<dbReference type="CDD" id="cd04732">
    <property type="entry name" value="HisA"/>
    <property type="match status" value="1"/>
</dbReference>
<dbReference type="FunFam" id="3.20.20.70:FF:000009">
    <property type="entry name" value="1-(5-phosphoribosyl)-5-[(5-phosphoribosylamino)methylideneamino] imidazole-4-carboxamide isomerase"/>
    <property type="match status" value="1"/>
</dbReference>
<dbReference type="Gene3D" id="3.20.20.70">
    <property type="entry name" value="Aldolase class I"/>
    <property type="match status" value="1"/>
</dbReference>
<dbReference type="HAMAP" id="MF_01014">
    <property type="entry name" value="HisA"/>
    <property type="match status" value="1"/>
</dbReference>
<dbReference type="InterPro" id="IPR013785">
    <property type="entry name" value="Aldolase_TIM"/>
</dbReference>
<dbReference type="InterPro" id="IPR006062">
    <property type="entry name" value="His_biosynth"/>
</dbReference>
<dbReference type="InterPro" id="IPR044524">
    <property type="entry name" value="Isoase_HisA-like"/>
</dbReference>
<dbReference type="InterPro" id="IPR023016">
    <property type="entry name" value="Isoase_HisA-like_bact"/>
</dbReference>
<dbReference type="InterPro" id="IPR011060">
    <property type="entry name" value="RibuloseP-bd_barrel"/>
</dbReference>
<dbReference type="PANTHER" id="PTHR43090">
    <property type="entry name" value="1-(5-PHOSPHORIBOSYL)-5-[(5-PHOSPHORIBOSYLAMINO)METHYLIDENEAMINO] IMIDAZOLE-4-CARBOXAMIDE ISOMERASE"/>
    <property type="match status" value="1"/>
</dbReference>
<dbReference type="PANTHER" id="PTHR43090:SF2">
    <property type="entry name" value="1-(5-PHOSPHORIBOSYL)-5-[(5-PHOSPHORIBOSYLAMINO)METHYLIDENEAMINO] IMIDAZOLE-4-CARBOXAMIDE ISOMERASE"/>
    <property type="match status" value="1"/>
</dbReference>
<dbReference type="Pfam" id="PF00977">
    <property type="entry name" value="His_biosynth"/>
    <property type="match status" value="1"/>
</dbReference>
<dbReference type="SUPFAM" id="SSF51366">
    <property type="entry name" value="Ribulose-phoshate binding barrel"/>
    <property type="match status" value="1"/>
</dbReference>
<sequence>MISKETFEIFPSVDIVDGIAMTSNSAIRLTRGESSTLRRPLGTPAEVALAWQNAGAKWIHVVDLDAASGRGSNSHLIADVLAAVDINVQVCGGIRDETILRKVLATGCQRVNLGTAALENPDWCAQAIAEYGDKIAIALDVKSTSEGYQLATHGWNVSKGNLWDLLERLDKQGCQRYVVTDVERGGMMSSPNFTLLQEVCAKTSSPVIAGGGVSSLDDLRALADLSTIGVEGAILGQALHIGKVPLEDALAATQSPRR</sequence>
<proteinExistence type="inferred from homology"/>